<dbReference type="EC" id="7.1.2.2" evidence="1"/>
<dbReference type="EMBL" id="CP000029">
    <property type="protein sequence ID" value="AAW55097.1"/>
    <property type="molecule type" value="Genomic_DNA"/>
</dbReference>
<dbReference type="RefSeq" id="WP_001829913.1">
    <property type="nucleotide sequence ID" value="NC_002976.3"/>
</dbReference>
<dbReference type="SMR" id="Q5HMB7"/>
<dbReference type="STRING" id="176279.SERP1711"/>
<dbReference type="GeneID" id="50018197"/>
<dbReference type="KEGG" id="ser:SERP1711"/>
<dbReference type="eggNOG" id="COG0056">
    <property type="taxonomic scope" value="Bacteria"/>
</dbReference>
<dbReference type="HOGENOM" id="CLU_010091_2_1_9"/>
<dbReference type="Proteomes" id="UP000000531">
    <property type="component" value="Chromosome"/>
</dbReference>
<dbReference type="GO" id="GO:0005886">
    <property type="term" value="C:plasma membrane"/>
    <property type="evidence" value="ECO:0007669"/>
    <property type="project" value="UniProtKB-SubCell"/>
</dbReference>
<dbReference type="GO" id="GO:0045259">
    <property type="term" value="C:proton-transporting ATP synthase complex"/>
    <property type="evidence" value="ECO:0007669"/>
    <property type="project" value="UniProtKB-KW"/>
</dbReference>
<dbReference type="GO" id="GO:0043531">
    <property type="term" value="F:ADP binding"/>
    <property type="evidence" value="ECO:0007669"/>
    <property type="project" value="TreeGrafter"/>
</dbReference>
<dbReference type="GO" id="GO:0005524">
    <property type="term" value="F:ATP binding"/>
    <property type="evidence" value="ECO:0007669"/>
    <property type="project" value="UniProtKB-UniRule"/>
</dbReference>
<dbReference type="GO" id="GO:0046933">
    <property type="term" value="F:proton-transporting ATP synthase activity, rotational mechanism"/>
    <property type="evidence" value="ECO:0007669"/>
    <property type="project" value="UniProtKB-UniRule"/>
</dbReference>
<dbReference type="CDD" id="cd18113">
    <property type="entry name" value="ATP-synt_F1_alpha_C"/>
    <property type="match status" value="1"/>
</dbReference>
<dbReference type="CDD" id="cd18116">
    <property type="entry name" value="ATP-synt_F1_alpha_N"/>
    <property type="match status" value="1"/>
</dbReference>
<dbReference type="CDD" id="cd01132">
    <property type="entry name" value="F1-ATPase_alpha_CD"/>
    <property type="match status" value="1"/>
</dbReference>
<dbReference type="FunFam" id="1.20.150.20:FF:000001">
    <property type="entry name" value="ATP synthase subunit alpha"/>
    <property type="match status" value="1"/>
</dbReference>
<dbReference type="FunFam" id="2.40.30.20:FF:000001">
    <property type="entry name" value="ATP synthase subunit alpha"/>
    <property type="match status" value="1"/>
</dbReference>
<dbReference type="FunFam" id="3.40.50.300:FF:000002">
    <property type="entry name" value="ATP synthase subunit alpha"/>
    <property type="match status" value="1"/>
</dbReference>
<dbReference type="Gene3D" id="2.40.30.20">
    <property type="match status" value="1"/>
</dbReference>
<dbReference type="Gene3D" id="1.20.150.20">
    <property type="entry name" value="ATP synthase alpha/beta chain, C-terminal domain"/>
    <property type="match status" value="1"/>
</dbReference>
<dbReference type="Gene3D" id="3.40.50.300">
    <property type="entry name" value="P-loop containing nucleotide triphosphate hydrolases"/>
    <property type="match status" value="1"/>
</dbReference>
<dbReference type="HAMAP" id="MF_01346">
    <property type="entry name" value="ATP_synth_alpha_bact"/>
    <property type="match status" value="1"/>
</dbReference>
<dbReference type="InterPro" id="IPR023366">
    <property type="entry name" value="ATP_synth_asu-like_sf"/>
</dbReference>
<dbReference type="InterPro" id="IPR000793">
    <property type="entry name" value="ATP_synth_asu_C"/>
</dbReference>
<dbReference type="InterPro" id="IPR038376">
    <property type="entry name" value="ATP_synth_asu_C_sf"/>
</dbReference>
<dbReference type="InterPro" id="IPR033732">
    <property type="entry name" value="ATP_synth_F1_a_nt-bd_dom"/>
</dbReference>
<dbReference type="InterPro" id="IPR005294">
    <property type="entry name" value="ATP_synth_F1_asu"/>
</dbReference>
<dbReference type="InterPro" id="IPR020003">
    <property type="entry name" value="ATPase_a/bsu_AS"/>
</dbReference>
<dbReference type="InterPro" id="IPR004100">
    <property type="entry name" value="ATPase_F1/V1/A1_a/bsu_N"/>
</dbReference>
<dbReference type="InterPro" id="IPR036121">
    <property type="entry name" value="ATPase_F1/V1/A1_a/bsu_N_sf"/>
</dbReference>
<dbReference type="InterPro" id="IPR000194">
    <property type="entry name" value="ATPase_F1/V1/A1_a/bsu_nucl-bd"/>
</dbReference>
<dbReference type="InterPro" id="IPR027417">
    <property type="entry name" value="P-loop_NTPase"/>
</dbReference>
<dbReference type="NCBIfam" id="TIGR00962">
    <property type="entry name" value="atpA"/>
    <property type="match status" value="1"/>
</dbReference>
<dbReference type="NCBIfam" id="NF009884">
    <property type="entry name" value="PRK13343.1"/>
    <property type="match status" value="1"/>
</dbReference>
<dbReference type="PANTHER" id="PTHR48082">
    <property type="entry name" value="ATP SYNTHASE SUBUNIT ALPHA, MITOCHONDRIAL"/>
    <property type="match status" value="1"/>
</dbReference>
<dbReference type="PANTHER" id="PTHR48082:SF2">
    <property type="entry name" value="ATP SYNTHASE SUBUNIT ALPHA, MITOCHONDRIAL"/>
    <property type="match status" value="1"/>
</dbReference>
<dbReference type="Pfam" id="PF00006">
    <property type="entry name" value="ATP-synt_ab"/>
    <property type="match status" value="1"/>
</dbReference>
<dbReference type="Pfam" id="PF00306">
    <property type="entry name" value="ATP-synt_ab_C"/>
    <property type="match status" value="1"/>
</dbReference>
<dbReference type="Pfam" id="PF02874">
    <property type="entry name" value="ATP-synt_ab_N"/>
    <property type="match status" value="1"/>
</dbReference>
<dbReference type="PIRSF" id="PIRSF039088">
    <property type="entry name" value="F_ATPase_subunit_alpha"/>
    <property type="match status" value="1"/>
</dbReference>
<dbReference type="SUPFAM" id="SSF47917">
    <property type="entry name" value="C-terminal domain of alpha and beta subunits of F1 ATP synthase"/>
    <property type="match status" value="1"/>
</dbReference>
<dbReference type="SUPFAM" id="SSF50615">
    <property type="entry name" value="N-terminal domain of alpha and beta subunits of F1 ATP synthase"/>
    <property type="match status" value="1"/>
</dbReference>
<dbReference type="SUPFAM" id="SSF52540">
    <property type="entry name" value="P-loop containing nucleoside triphosphate hydrolases"/>
    <property type="match status" value="1"/>
</dbReference>
<dbReference type="PROSITE" id="PS00152">
    <property type="entry name" value="ATPASE_ALPHA_BETA"/>
    <property type="match status" value="1"/>
</dbReference>
<evidence type="ECO:0000255" key="1">
    <source>
        <dbReference type="HAMAP-Rule" id="MF_01346"/>
    </source>
</evidence>
<name>ATPA_STAEQ</name>
<proteinExistence type="inferred from homology"/>
<sequence length="503" mass="54743">MAIKAEEISALLRSQIENYESEMSVTDVGTVLQIGDGIALIHGLNDVMAGELVEFHNGVLGLAQNLEESNVGVVILGPYEEISEGDEVKRTGRIMEVPVGEEMIGRVVNPLGQPIDGQGPINATKTRPVEKKATGVMDRKSVDEPLQTGIKAIDALVPIGRGQRELIIGDRQTGKTTVAIDSILNQKDQDTICIYVAIGQKDSTVRANVEKLRQAGALDYTIVVSASAADPAPLLYIAPYSGVTMGEEFMFNGKHVLIVYDDLTKQAAAYRELSLLLRRPPGREAYPGDVFYLHSRLLERAAKLNDDLGGGSITALPIIETQAGDISAYVPTNVISITDGQIFLQSDLFFSGVRPAINAGQSVSRVGGSAQIKAMKKVAGTLRLDLASYRELESFAQFGSDLDEFTAKKLARGERTVEVLKQGQNNPLPVEHQVLIIFALTKGYLDDIPVQDINRFEEEFNHWAESNATELLNEIRETGALPDADKFDSAITEFKKGFNKSEE</sequence>
<comment type="function">
    <text evidence="1">Produces ATP from ADP in the presence of a proton gradient across the membrane. The alpha chain is a regulatory subunit.</text>
</comment>
<comment type="catalytic activity">
    <reaction evidence="1">
        <text>ATP + H2O + 4 H(+)(in) = ADP + phosphate + 5 H(+)(out)</text>
        <dbReference type="Rhea" id="RHEA:57720"/>
        <dbReference type="ChEBI" id="CHEBI:15377"/>
        <dbReference type="ChEBI" id="CHEBI:15378"/>
        <dbReference type="ChEBI" id="CHEBI:30616"/>
        <dbReference type="ChEBI" id="CHEBI:43474"/>
        <dbReference type="ChEBI" id="CHEBI:456216"/>
        <dbReference type="EC" id="7.1.2.2"/>
    </reaction>
</comment>
<comment type="subunit">
    <text evidence="1">F-type ATPases have 2 components, CF(1) - the catalytic core - and CF(0) - the membrane proton channel. CF(1) has five subunits: alpha(3), beta(3), gamma(1), delta(1), epsilon(1). CF(0) has three main subunits: a(1), b(2) and c(9-12). The alpha and beta chains form an alternating ring which encloses part of the gamma chain. CF(1) is attached to CF(0) by a central stalk formed by the gamma and epsilon chains, while a peripheral stalk is formed by the delta and b chains.</text>
</comment>
<comment type="subcellular location">
    <subcellularLocation>
        <location evidence="1">Cell membrane</location>
        <topology evidence="1">Peripheral membrane protein</topology>
    </subcellularLocation>
</comment>
<comment type="similarity">
    <text evidence="1">Belongs to the ATPase alpha/beta chains family.</text>
</comment>
<organism>
    <name type="scientific">Staphylococcus epidermidis (strain ATCC 35984 / DSM 28319 / BCRC 17069 / CCUG 31568 / BM 3577 / RP62A)</name>
    <dbReference type="NCBI Taxonomy" id="176279"/>
    <lineage>
        <taxon>Bacteria</taxon>
        <taxon>Bacillati</taxon>
        <taxon>Bacillota</taxon>
        <taxon>Bacilli</taxon>
        <taxon>Bacillales</taxon>
        <taxon>Staphylococcaceae</taxon>
        <taxon>Staphylococcus</taxon>
    </lineage>
</organism>
<protein>
    <recommendedName>
        <fullName evidence="1">ATP synthase subunit alpha</fullName>
        <ecNumber evidence="1">7.1.2.2</ecNumber>
    </recommendedName>
    <alternativeName>
        <fullName evidence="1">ATP synthase F1 sector subunit alpha</fullName>
    </alternativeName>
    <alternativeName>
        <fullName evidence="1">F-ATPase subunit alpha</fullName>
    </alternativeName>
</protein>
<feature type="chain" id="PRO_0000144357" description="ATP synthase subunit alpha">
    <location>
        <begin position="1"/>
        <end position="503"/>
    </location>
</feature>
<feature type="binding site" evidence="1">
    <location>
        <begin position="169"/>
        <end position="176"/>
    </location>
    <ligand>
        <name>ATP</name>
        <dbReference type="ChEBI" id="CHEBI:30616"/>
    </ligand>
</feature>
<feature type="site" description="Required for activity" evidence="1">
    <location>
        <position position="362"/>
    </location>
</feature>
<accession>Q5HMB7</accession>
<reference key="1">
    <citation type="journal article" date="2005" name="J. Bacteriol.">
        <title>Insights on evolution of virulence and resistance from the complete genome analysis of an early methicillin-resistant Staphylococcus aureus strain and a biofilm-producing methicillin-resistant Staphylococcus epidermidis strain.</title>
        <authorList>
            <person name="Gill S.R."/>
            <person name="Fouts D.E."/>
            <person name="Archer G.L."/>
            <person name="Mongodin E.F."/>
            <person name="DeBoy R.T."/>
            <person name="Ravel J."/>
            <person name="Paulsen I.T."/>
            <person name="Kolonay J.F."/>
            <person name="Brinkac L.M."/>
            <person name="Beanan M.J."/>
            <person name="Dodson R.J."/>
            <person name="Daugherty S.C."/>
            <person name="Madupu R."/>
            <person name="Angiuoli S.V."/>
            <person name="Durkin A.S."/>
            <person name="Haft D.H."/>
            <person name="Vamathevan J.J."/>
            <person name="Khouri H."/>
            <person name="Utterback T.R."/>
            <person name="Lee C."/>
            <person name="Dimitrov G."/>
            <person name="Jiang L."/>
            <person name="Qin H."/>
            <person name="Weidman J."/>
            <person name="Tran K."/>
            <person name="Kang K.H."/>
            <person name="Hance I.R."/>
            <person name="Nelson K.E."/>
            <person name="Fraser C.M."/>
        </authorList>
    </citation>
    <scope>NUCLEOTIDE SEQUENCE [LARGE SCALE GENOMIC DNA]</scope>
    <source>
        <strain>ATCC 35984 / DSM 28319 / BCRC 17069 / CCUG 31568 / BM 3577 / RP62A</strain>
    </source>
</reference>
<gene>
    <name evidence="1" type="primary">atpA</name>
    <name type="ordered locus">SERP1711</name>
</gene>
<keyword id="KW-0066">ATP synthesis</keyword>
<keyword id="KW-0067">ATP-binding</keyword>
<keyword id="KW-1003">Cell membrane</keyword>
<keyword id="KW-0139">CF(1)</keyword>
<keyword id="KW-0375">Hydrogen ion transport</keyword>
<keyword id="KW-0406">Ion transport</keyword>
<keyword id="KW-0472">Membrane</keyword>
<keyword id="KW-0547">Nucleotide-binding</keyword>
<keyword id="KW-1185">Reference proteome</keyword>
<keyword id="KW-1278">Translocase</keyword>
<keyword id="KW-0813">Transport</keyword>